<comment type="function">
    <text evidence="1">Specifically catalyzes the AdoMet-dependent 2'-O-ribose methylation of cytidine at position 56 in tRNAs.</text>
</comment>
<comment type="catalytic activity">
    <reaction evidence="1">
        <text>cytidine(56) in tRNA + S-adenosyl-L-methionine = 2'-O-methylcytidine(56) in tRNA + S-adenosyl-L-homocysteine + H(+)</text>
        <dbReference type="Rhea" id="RHEA:42968"/>
        <dbReference type="Rhea" id="RHEA-COMP:10308"/>
        <dbReference type="Rhea" id="RHEA-COMP:10309"/>
        <dbReference type="ChEBI" id="CHEBI:15378"/>
        <dbReference type="ChEBI" id="CHEBI:57856"/>
        <dbReference type="ChEBI" id="CHEBI:59789"/>
        <dbReference type="ChEBI" id="CHEBI:74495"/>
        <dbReference type="ChEBI" id="CHEBI:82748"/>
        <dbReference type="EC" id="2.1.1.206"/>
    </reaction>
</comment>
<comment type="subunit">
    <text evidence="1">Homodimer.</text>
</comment>
<comment type="subcellular location">
    <subcellularLocation>
        <location evidence="1">Cytoplasm</location>
    </subcellularLocation>
</comment>
<comment type="similarity">
    <text evidence="1">Belongs to the aTrm56 family.</text>
</comment>
<dbReference type="EC" id="2.1.1.206" evidence="1"/>
<dbReference type="EMBL" id="BA000023">
    <property type="protein sequence ID" value="BAK54241.1"/>
    <property type="molecule type" value="Genomic_DNA"/>
</dbReference>
<dbReference type="RefSeq" id="WP_338055443.1">
    <property type="nucleotide sequence ID" value="NC_003106.2"/>
</dbReference>
<dbReference type="SMR" id="Q975T9"/>
<dbReference type="STRING" id="273063.STK_03330"/>
<dbReference type="GeneID" id="1458247"/>
<dbReference type="KEGG" id="sto:STK_03330"/>
<dbReference type="PATRIC" id="fig|273063.9.peg.389"/>
<dbReference type="eggNOG" id="arCOG01857">
    <property type="taxonomic scope" value="Archaea"/>
</dbReference>
<dbReference type="Proteomes" id="UP000001015">
    <property type="component" value="Chromosome"/>
</dbReference>
<dbReference type="GO" id="GO:0005737">
    <property type="term" value="C:cytoplasm"/>
    <property type="evidence" value="ECO:0007669"/>
    <property type="project" value="UniProtKB-SubCell"/>
</dbReference>
<dbReference type="GO" id="GO:0106059">
    <property type="term" value="F:tRNA (cytidine(56)-2'-O)-methyltransferase activity"/>
    <property type="evidence" value="ECO:0007669"/>
    <property type="project" value="UniProtKB-EC"/>
</dbReference>
<dbReference type="GO" id="GO:0002128">
    <property type="term" value="P:tRNA nucleoside ribose methylation"/>
    <property type="evidence" value="ECO:0007669"/>
    <property type="project" value="UniProtKB-UniRule"/>
</dbReference>
<dbReference type="CDD" id="cd18083">
    <property type="entry name" value="aTrm56-like"/>
    <property type="match status" value="1"/>
</dbReference>
<dbReference type="Gene3D" id="3.40.1280.10">
    <property type="match status" value="1"/>
</dbReference>
<dbReference type="HAMAP" id="MF_00077">
    <property type="entry name" value="tRNA_methyltr_aTrm56"/>
    <property type="match status" value="1"/>
</dbReference>
<dbReference type="InterPro" id="IPR029028">
    <property type="entry name" value="Alpha/beta_knot_MTases"/>
</dbReference>
<dbReference type="InterPro" id="IPR029026">
    <property type="entry name" value="tRNA_m1G_MTases_N"/>
</dbReference>
<dbReference type="InterPro" id="IPR002845">
    <property type="entry name" value="tRNA_mtfrase_aTrm56"/>
</dbReference>
<dbReference type="PANTHER" id="PTHR42197">
    <property type="entry name" value="TRNA (CYTIDINE(56)-2'-O)-METHYLTRANSFERASE"/>
    <property type="match status" value="1"/>
</dbReference>
<dbReference type="PANTHER" id="PTHR42197:SF1">
    <property type="entry name" value="TRNA (CYTIDINE(56)-2'-O)-METHYLTRANSFERASE"/>
    <property type="match status" value="1"/>
</dbReference>
<dbReference type="Pfam" id="PF01994">
    <property type="entry name" value="Trm56"/>
    <property type="match status" value="1"/>
</dbReference>
<dbReference type="PIRSF" id="PIRSF016123">
    <property type="entry name" value="UCP016123"/>
    <property type="match status" value="1"/>
</dbReference>
<dbReference type="SUPFAM" id="SSF75217">
    <property type="entry name" value="alpha/beta knot"/>
    <property type="match status" value="1"/>
</dbReference>
<gene>
    <name type="ordered locus">STK_03330</name>
</gene>
<reference key="1">
    <citation type="journal article" date="2001" name="DNA Res.">
        <title>Complete genome sequence of an aerobic thermoacidophilic Crenarchaeon, Sulfolobus tokodaii strain7.</title>
        <authorList>
            <person name="Kawarabayasi Y."/>
            <person name="Hino Y."/>
            <person name="Horikawa H."/>
            <person name="Jin-no K."/>
            <person name="Takahashi M."/>
            <person name="Sekine M."/>
            <person name="Baba S."/>
            <person name="Ankai A."/>
            <person name="Kosugi H."/>
            <person name="Hosoyama A."/>
            <person name="Fukui S."/>
            <person name="Nagai Y."/>
            <person name="Nishijima K."/>
            <person name="Otsuka R."/>
            <person name="Nakazawa H."/>
            <person name="Takamiya M."/>
            <person name="Kato Y."/>
            <person name="Yoshizawa T."/>
            <person name="Tanaka T."/>
            <person name="Kudoh Y."/>
            <person name="Yamazaki J."/>
            <person name="Kushida N."/>
            <person name="Oguchi A."/>
            <person name="Aoki K."/>
            <person name="Masuda S."/>
            <person name="Yanagii M."/>
            <person name="Nishimura M."/>
            <person name="Yamagishi A."/>
            <person name="Oshima T."/>
            <person name="Kikuchi H."/>
        </authorList>
    </citation>
    <scope>NUCLEOTIDE SEQUENCE [LARGE SCALE GENOMIC DNA]</scope>
    <source>
        <strain>DSM 16993 / JCM 10545 / NBRC 100140 / 7</strain>
    </source>
</reference>
<accession>Q975T9</accession>
<accession>F9VMU4</accession>
<sequence>MHHRPERDKRVTTHVALVARAFGAKGIFIHGEDMNLLKTIEKVKANWGGKYFSIEFVKNPKKVVRDWRNSGGIVVHLTMYGIPIDNIMEKIINKNTKILVVVGSEKVEGWYYYNSDYNIAIGNQPHSEVAALAIFLDRIYKGGELNIQFSDAKLSIIPQERGKKVRKNE</sequence>
<evidence type="ECO:0000255" key="1">
    <source>
        <dbReference type="HAMAP-Rule" id="MF_00077"/>
    </source>
</evidence>
<name>TRM56_SULTO</name>
<feature type="chain" id="PRO_0000365322" description="tRNA (cytidine(56)-2'-O)-methyltransferase">
    <location>
        <begin position="1"/>
        <end position="169"/>
    </location>
</feature>
<feature type="binding site" evidence="1">
    <location>
        <position position="77"/>
    </location>
    <ligand>
        <name>S-adenosyl-L-methionine</name>
        <dbReference type="ChEBI" id="CHEBI:59789"/>
    </ligand>
</feature>
<feature type="binding site" evidence="1">
    <location>
        <begin position="103"/>
        <end position="107"/>
    </location>
    <ligand>
        <name>S-adenosyl-L-methionine</name>
        <dbReference type="ChEBI" id="CHEBI:59789"/>
    </ligand>
</feature>
<feature type="binding site" evidence="1">
    <location>
        <begin position="121"/>
        <end position="128"/>
    </location>
    <ligand>
        <name>S-adenosyl-L-methionine</name>
        <dbReference type="ChEBI" id="CHEBI:59789"/>
    </ligand>
</feature>
<keyword id="KW-0963">Cytoplasm</keyword>
<keyword id="KW-0489">Methyltransferase</keyword>
<keyword id="KW-1185">Reference proteome</keyword>
<keyword id="KW-0949">S-adenosyl-L-methionine</keyword>
<keyword id="KW-0808">Transferase</keyword>
<keyword id="KW-0819">tRNA processing</keyword>
<proteinExistence type="inferred from homology"/>
<organism>
    <name type="scientific">Sulfurisphaera tokodaii (strain DSM 16993 / JCM 10545 / NBRC 100140 / 7)</name>
    <name type="common">Sulfolobus tokodaii</name>
    <dbReference type="NCBI Taxonomy" id="273063"/>
    <lineage>
        <taxon>Archaea</taxon>
        <taxon>Thermoproteota</taxon>
        <taxon>Thermoprotei</taxon>
        <taxon>Sulfolobales</taxon>
        <taxon>Sulfolobaceae</taxon>
        <taxon>Sulfurisphaera</taxon>
    </lineage>
</organism>
<protein>
    <recommendedName>
        <fullName evidence="1">tRNA (cytidine(56)-2'-O)-methyltransferase</fullName>
        <ecNumber evidence="1">2.1.1.206</ecNumber>
    </recommendedName>
    <alternativeName>
        <fullName evidence="1">tRNA ribose 2'-O-methyltransferase aTrm56</fullName>
    </alternativeName>
</protein>